<protein>
    <recommendedName>
        <fullName>Bombesin</fullName>
    </recommendedName>
</protein>
<evidence type="ECO:0000255" key="1"/>
<evidence type="ECO:0000269" key="2">
    <source>
    </source>
</evidence>
<evidence type="ECO:0000269" key="3">
    <source>
    </source>
</evidence>
<evidence type="ECO:0000269" key="4">
    <source>
    </source>
</evidence>
<evidence type="ECO:0000305" key="5"/>
<feature type="signal peptide" evidence="1">
    <location>
        <begin position="1"/>
        <end position="26"/>
    </location>
</feature>
<feature type="propeptide" id="PRO_0000003008">
    <location>
        <begin position="27"/>
        <end position="41"/>
    </location>
</feature>
<feature type="peptide" id="PRO_0000003009" description="Bombesin">
    <location>
        <begin position="42"/>
        <end position="55"/>
    </location>
</feature>
<feature type="propeptide" id="PRO_0000003010">
    <location>
        <begin position="56"/>
        <end position="107"/>
    </location>
</feature>
<feature type="modified residue" description="Pyrrolidone carboxylic acid" evidence="4">
    <location>
        <position position="42"/>
    </location>
</feature>
<feature type="modified residue" description="Methionine amide" evidence="4">
    <location>
        <position position="55"/>
    </location>
</feature>
<keyword id="KW-0027">Amidation</keyword>
<keyword id="KW-0878">Amphibian defense peptide</keyword>
<keyword id="KW-0165">Cleavage on pair of basic residues</keyword>
<keyword id="KW-0903">Direct protein sequencing</keyword>
<keyword id="KW-0873">Pyrrolidone carboxylic acid</keyword>
<keyword id="KW-0964">Secreted</keyword>
<keyword id="KW-0732">Signal</keyword>
<proteinExistence type="evidence at protein level"/>
<sequence length="107" mass="12341">MSAIPLNRILPLGFLLIFSFISLSSCMEFVEDPNNQGGLNLQQRLGNQWAVGHLMGKKSLQDTDFEEMESFAKRNVENMKAESERELRHAQLVVRNILEQYLKNMQN</sequence>
<dbReference type="EMBL" id="X52447">
    <property type="protein sequence ID" value="CAA36686.1"/>
    <property type="molecule type" value="mRNA"/>
</dbReference>
<dbReference type="PIR" id="S09095">
    <property type="entry name" value="BSTDY"/>
</dbReference>
<dbReference type="SMR" id="P84213"/>
<dbReference type="BindingDB" id="P84213"/>
<dbReference type="GO" id="GO:0005576">
    <property type="term" value="C:extracellular region"/>
    <property type="evidence" value="ECO:0000314"/>
    <property type="project" value="UniProtKB"/>
</dbReference>
<dbReference type="GO" id="GO:0005179">
    <property type="term" value="F:hormone activity"/>
    <property type="evidence" value="ECO:0000304"/>
    <property type="project" value="UniProtKB"/>
</dbReference>
<dbReference type="GO" id="GO:0006952">
    <property type="term" value="P:defense response"/>
    <property type="evidence" value="ECO:0000304"/>
    <property type="project" value="UniProtKB"/>
</dbReference>
<dbReference type="GO" id="GO:0007218">
    <property type="term" value="P:neuropeptide signaling pathway"/>
    <property type="evidence" value="ECO:0007669"/>
    <property type="project" value="InterPro"/>
</dbReference>
<dbReference type="GO" id="GO:0045987">
    <property type="term" value="P:positive regulation of smooth muscle contraction"/>
    <property type="evidence" value="ECO:0000303"/>
    <property type="project" value="UniProtKB"/>
</dbReference>
<dbReference type="GO" id="GO:0050796">
    <property type="term" value="P:regulation of insulin secretion"/>
    <property type="evidence" value="ECO:0000314"/>
    <property type="project" value="UniProtKB"/>
</dbReference>
<dbReference type="InterPro" id="IPR000874">
    <property type="entry name" value="Bombesin"/>
</dbReference>
<dbReference type="Pfam" id="PF02044">
    <property type="entry name" value="Bombesin"/>
    <property type="match status" value="1"/>
</dbReference>
<dbReference type="PROSITE" id="PS00257">
    <property type="entry name" value="BOMBESIN"/>
    <property type="match status" value="1"/>
</dbReference>
<name>BOMB_BOMVA</name>
<comment type="function">
    <text evidence="2">Stimulates smooth muscle contraction. Role in induction of hypothermia, stimulation of DNA replication and release of many gastrointestinal hormones. Possesses insulin-releasing activity.</text>
</comment>
<comment type="subcellular location">
    <subcellularLocation>
        <location evidence="2 3 4">Secreted</location>
    </subcellularLocation>
</comment>
<comment type="tissue specificity">
    <text evidence="2 3 4">Expressed by the skin glands.</text>
</comment>
<comment type="mass spectrometry" mass="1619.8" method="Electrospray" evidence="2"/>
<comment type="similarity">
    <text evidence="5">Belongs to the bombesin/neuromedin-B/ranatensin family.</text>
</comment>
<reference key="1">
    <citation type="journal article" date="1990" name="FEBS Lett.">
        <title>Molecular cloning of a cDNA encoding the bombesin precursor in skin of Bombina variegata.</title>
        <authorList>
            <person name="Richter K."/>
            <person name="Egger R."/>
            <person name="Kreil G."/>
        </authorList>
    </citation>
    <scope>NUCLEOTIDE SEQUENCE [MRNA]</scope>
    <scope>SUBCELLULAR LOCATION</scope>
    <scope>TISSUE SPECIFICITY</scope>
    <source>
        <tissue>Skin</tissue>
    </source>
</reference>
<reference key="2">
    <citation type="journal article" date="1972" name="Arch. Biochem. Biophys.">
        <title>Isolation and amino acid sequences of alytesin and bombesin, two analogous active tetradecapeptides from the skin of European discoglossid frogs.</title>
        <authorList>
            <person name="Anastasi A."/>
            <person name="Erspamer V."/>
            <person name="Bucci M."/>
        </authorList>
    </citation>
    <scope>PROTEIN SEQUENCE OF 42-55</scope>
    <scope>SUBCELLULAR LOCATION</scope>
    <scope>PYROGLUTAMATE FORMATION AT GLN-42</scope>
    <scope>AMIDATION AT MET-55</scope>
    <scope>TISSUE SPECIFICITY</scope>
    <source>
        <tissue>Skin secretion</tissue>
    </source>
</reference>
<reference key="3">
    <citation type="journal article" date="2004" name="Biol. Chem.">
        <title>Skin secretion of the toad Bombina variegata contains multiple insulin-releasing peptides including bombesin and entirely novel insulinotropic structures.</title>
        <authorList>
            <person name="Marenah L."/>
            <person name="Flatt P.R."/>
            <person name="Orr D.F."/>
            <person name="McClean S."/>
            <person name="Shaw C."/>
            <person name="Abdel-Wahab Y.H."/>
        </authorList>
    </citation>
    <scope>PROTEIN SEQUENCE OF 42-55</scope>
    <scope>FUNCTION</scope>
    <scope>SUBCELLULAR LOCATION</scope>
    <scope>TISSUE SPECIFICITY</scope>
    <scope>MASS SPECTROMETRY</scope>
    <source>
        <tissue>Skin secretion</tissue>
    </source>
</reference>
<organism>
    <name type="scientific">Bombina variegata</name>
    <name type="common">Yellow-bellied toad</name>
    <dbReference type="NCBI Taxonomy" id="8348"/>
    <lineage>
        <taxon>Eukaryota</taxon>
        <taxon>Metazoa</taxon>
        <taxon>Chordata</taxon>
        <taxon>Craniata</taxon>
        <taxon>Vertebrata</taxon>
        <taxon>Euteleostomi</taxon>
        <taxon>Amphibia</taxon>
        <taxon>Batrachia</taxon>
        <taxon>Anura</taxon>
        <taxon>Bombinatoridae</taxon>
        <taxon>Bombina</taxon>
    </lineage>
</organism>
<accession>P84213</accession>
<accession>P01296</accession>